<dbReference type="EMBL" id="CP000896">
    <property type="protein sequence ID" value="ABX81505.1"/>
    <property type="molecule type" value="Genomic_DNA"/>
</dbReference>
<dbReference type="RefSeq" id="WP_012242836.1">
    <property type="nucleotide sequence ID" value="NC_010163.1"/>
</dbReference>
<dbReference type="SMR" id="A9NGM5"/>
<dbReference type="STRING" id="441768.ACL_0892"/>
<dbReference type="GeneID" id="41339045"/>
<dbReference type="KEGG" id="acl:ACL_0892"/>
<dbReference type="eggNOG" id="COG0268">
    <property type="taxonomic scope" value="Bacteria"/>
</dbReference>
<dbReference type="HOGENOM" id="CLU_160655_0_1_14"/>
<dbReference type="OrthoDB" id="9808392at2"/>
<dbReference type="Proteomes" id="UP000008558">
    <property type="component" value="Chromosome"/>
</dbReference>
<dbReference type="GO" id="GO:0005829">
    <property type="term" value="C:cytosol"/>
    <property type="evidence" value="ECO:0007669"/>
    <property type="project" value="TreeGrafter"/>
</dbReference>
<dbReference type="GO" id="GO:0015935">
    <property type="term" value="C:small ribosomal subunit"/>
    <property type="evidence" value="ECO:0007669"/>
    <property type="project" value="TreeGrafter"/>
</dbReference>
<dbReference type="GO" id="GO:0070181">
    <property type="term" value="F:small ribosomal subunit rRNA binding"/>
    <property type="evidence" value="ECO:0007669"/>
    <property type="project" value="TreeGrafter"/>
</dbReference>
<dbReference type="GO" id="GO:0003735">
    <property type="term" value="F:structural constituent of ribosome"/>
    <property type="evidence" value="ECO:0007669"/>
    <property type="project" value="InterPro"/>
</dbReference>
<dbReference type="GO" id="GO:0006412">
    <property type="term" value="P:translation"/>
    <property type="evidence" value="ECO:0007669"/>
    <property type="project" value="UniProtKB-UniRule"/>
</dbReference>
<dbReference type="FunFam" id="1.20.58.110:FF:000001">
    <property type="entry name" value="30S ribosomal protein S20"/>
    <property type="match status" value="1"/>
</dbReference>
<dbReference type="Gene3D" id="1.20.58.110">
    <property type="entry name" value="Ribosomal protein S20"/>
    <property type="match status" value="1"/>
</dbReference>
<dbReference type="HAMAP" id="MF_00500">
    <property type="entry name" value="Ribosomal_bS20"/>
    <property type="match status" value="1"/>
</dbReference>
<dbReference type="InterPro" id="IPR002583">
    <property type="entry name" value="Ribosomal_bS20"/>
</dbReference>
<dbReference type="InterPro" id="IPR036510">
    <property type="entry name" value="Ribosomal_bS20_sf"/>
</dbReference>
<dbReference type="NCBIfam" id="TIGR00029">
    <property type="entry name" value="S20"/>
    <property type="match status" value="1"/>
</dbReference>
<dbReference type="PANTHER" id="PTHR33398">
    <property type="entry name" value="30S RIBOSOMAL PROTEIN S20"/>
    <property type="match status" value="1"/>
</dbReference>
<dbReference type="PANTHER" id="PTHR33398:SF1">
    <property type="entry name" value="SMALL RIBOSOMAL SUBUNIT PROTEIN BS20C"/>
    <property type="match status" value="1"/>
</dbReference>
<dbReference type="Pfam" id="PF01649">
    <property type="entry name" value="Ribosomal_S20p"/>
    <property type="match status" value="1"/>
</dbReference>
<dbReference type="SUPFAM" id="SSF46992">
    <property type="entry name" value="Ribosomal protein S20"/>
    <property type="match status" value="1"/>
</dbReference>
<feature type="chain" id="PRO_1000081413" description="Small ribosomal subunit protein bS20">
    <location>
        <begin position="1"/>
        <end position="86"/>
    </location>
</feature>
<feature type="region of interest" description="Disordered" evidence="2">
    <location>
        <begin position="1"/>
        <end position="20"/>
    </location>
</feature>
<feature type="compositionally biased region" description="Polar residues" evidence="2">
    <location>
        <begin position="1"/>
        <end position="11"/>
    </location>
</feature>
<accession>A9NGM5</accession>
<sequence length="86" mass="9593">MANIKSQIKRNLTNEKRHQANVSFKSSYKTAVKAVEKAVEAKDKDLALAKLSFAHKKLDKGQAKGIFHKNFVARNKSALARLVNSL</sequence>
<comment type="function">
    <text evidence="1">Binds directly to 16S ribosomal RNA.</text>
</comment>
<comment type="similarity">
    <text evidence="1">Belongs to the bacterial ribosomal protein bS20 family.</text>
</comment>
<proteinExistence type="inferred from homology"/>
<gene>
    <name evidence="1" type="primary">rpsT</name>
    <name type="ordered locus">ACL_0892</name>
</gene>
<evidence type="ECO:0000255" key="1">
    <source>
        <dbReference type="HAMAP-Rule" id="MF_00500"/>
    </source>
</evidence>
<evidence type="ECO:0000256" key="2">
    <source>
        <dbReference type="SAM" id="MobiDB-lite"/>
    </source>
</evidence>
<evidence type="ECO:0000305" key="3"/>
<reference key="1">
    <citation type="journal article" date="2011" name="J. Bacteriol.">
        <title>Complete genome and proteome of Acholeplasma laidlawii.</title>
        <authorList>
            <person name="Lazarev V.N."/>
            <person name="Levitskii S.A."/>
            <person name="Basovskii Y.I."/>
            <person name="Chukin M.M."/>
            <person name="Akopian T.A."/>
            <person name="Vereshchagin V.V."/>
            <person name="Kostrjukova E.S."/>
            <person name="Kovaleva G.Y."/>
            <person name="Kazanov M.D."/>
            <person name="Malko D.B."/>
            <person name="Vitreschak A.G."/>
            <person name="Sernova N.V."/>
            <person name="Gelfand M.S."/>
            <person name="Demina I.A."/>
            <person name="Serebryakova M.V."/>
            <person name="Galyamina M.A."/>
            <person name="Vtyurin N.N."/>
            <person name="Rogov S.I."/>
            <person name="Alexeev D.G."/>
            <person name="Ladygina V.G."/>
            <person name="Govorun V.M."/>
        </authorList>
    </citation>
    <scope>NUCLEOTIDE SEQUENCE [LARGE SCALE GENOMIC DNA]</scope>
    <source>
        <strain>PG-8A</strain>
    </source>
</reference>
<keyword id="KW-1185">Reference proteome</keyword>
<keyword id="KW-0687">Ribonucleoprotein</keyword>
<keyword id="KW-0689">Ribosomal protein</keyword>
<keyword id="KW-0694">RNA-binding</keyword>
<keyword id="KW-0699">rRNA-binding</keyword>
<protein>
    <recommendedName>
        <fullName evidence="1">Small ribosomal subunit protein bS20</fullName>
    </recommendedName>
    <alternativeName>
        <fullName evidence="3">30S ribosomal protein S20</fullName>
    </alternativeName>
</protein>
<organism>
    <name type="scientific">Acholeplasma laidlawii (strain PG-8A)</name>
    <dbReference type="NCBI Taxonomy" id="441768"/>
    <lineage>
        <taxon>Bacteria</taxon>
        <taxon>Bacillati</taxon>
        <taxon>Mycoplasmatota</taxon>
        <taxon>Mollicutes</taxon>
        <taxon>Acholeplasmatales</taxon>
        <taxon>Acholeplasmataceae</taxon>
        <taxon>Acholeplasma</taxon>
    </lineage>
</organism>
<name>RS20_ACHLI</name>